<reference key="1">
    <citation type="journal article" date="2006" name="Virology">
        <title>Polydnavirus genomes reflect their dual roles as mutualists and pathogens.</title>
        <authorList>
            <person name="Webb B.A."/>
            <person name="Strand M.R."/>
            <person name="Dickey S.E."/>
            <person name="Beck M.H."/>
            <person name="Hilgarth R.S."/>
            <person name="Barney W.E."/>
            <person name="Kadash K."/>
            <person name="Kroemer J.A."/>
            <person name="Lindstrom K.G."/>
            <person name="Rattanadechakul W."/>
            <person name="Shelby K.S."/>
            <person name="Thoetkiattikul H."/>
            <person name="Turnbull M.W."/>
            <person name="Witherell R.A."/>
        </authorList>
    </citation>
    <scope>NUCLEOTIDE SEQUENCE [GENOMIC DNA]</scope>
</reference>
<reference key="2">
    <citation type="journal article" date="2005" name="Proc. Natl. Acad. Sci. U.S.A.">
        <title>Inhibitor kappaB-like proteins from a polydnavirus inhibit NF-kappaB activation and suppress the insect immune response.</title>
        <authorList>
            <person name="Thoetkiattikul H."/>
            <person name="Beck M.H."/>
            <person name="Strand M.R."/>
        </authorList>
    </citation>
    <scope>FUNCTION</scope>
</reference>
<protein>
    <recommendedName>
        <fullName>I-Kappa-B like protein I1</fullName>
    </recommendedName>
</protein>
<proteinExistence type="inferred from homology"/>
<accession>Q5EFR1</accession>
<dbReference type="EMBL" id="AY887894">
    <property type="protein sequence ID" value="AAW77933.1"/>
    <property type="molecule type" value="Genomic_DNA"/>
</dbReference>
<dbReference type="RefSeq" id="YP_239406.1">
    <property type="nucleotide sequence ID" value="NC_007041.1"/>
</dbReference>
<dbReference type="SMR" id="Q5EFR1"/>
<dbReference type="KEGG" id="vg:5075842"/>
<dbReference type="Proteomes" id="UP000008168">
    <property type="component" value="Genome"/>
</dbReference>
<dbReference type="GO" id="GO:0051059">
    <property type="term" value="F:NF-kappaB binding"/>
    <property type="evidence" value="ECO:0007669"/>
    <property type="project" value="TreeGrafter"/>
</dbReference>
<dbReference type="GO" id="GO:0071356">
    <property type="term" value="P:cellular response to tumor necrosis factor"/>
    <property type="evidence" value="ECO:0007669"/>
    <property type="project" value="TreeGrafter"/>
</dbReference>
<dbReference type="GO" id="GO:0085034">
    <property type="term" value="P:symbiont-mediated suppression of host NF-kappaB cascade"/>
    <property type="evidence" value="ECO:0007669"/>
    <property type="project" value="UniProtKB-KW"/>
</dbReference>
<dbReference type="Gene3D" id="1.25.40.20">
    <property type="entry name" value="Ankyrin repeat-containing domain"/>
    <property type="match status" value="1"/>
</dbReference>
<dbReference type="InterPro" id="IPR002110">
    <property type="entry name" value="Ankyrin_rpt"/>
</dbReference>
<dbReference type="InterPro" id="IPR036770">
    <property type="entry name" value="Ankyrin_rpt-contain_sf"/>
</dbReference>
<dbReference type="InterPro" id="IPR051070">
    <property type="entry name" value="NF-kappa-B_inhibitor"/>
</dbReference>
<dbReference type="PANTHER" id="PTHR46680">
    <property type="entry name" value="NF-KAPPA-B INHIBITOR ALPHA"/>
    <property type="match status" value="1"/>
</dbReference>
<dbReference type="PANTHER" id="PTHR46680:SF3">
    <property type="entry name" value="NF-KAPPA-B INHIBITOR CACTUS"/>
    <property type="match status" value="1"/>
</dbReference>
<dbReference type="Pfam" id="PF12796">
    <property type="entry name" value="Ank_2"/>
    <property type="match status" value="1"/>
</dbReference>
<dbReference type="SMART" id="SM00248">
    <property type="entry name" value="ANK"/>
    <property type="match status" value="2"/>
</dbReference>
<dbReference type="SUPFAM" id="SSF48403">
    <property type="entry name" value="Ankyrin repeat"/>
    <property type="match status" value="1"/>
</dbReference>
<dbReference type="PROSITE" id="PS50297">
    <property type="entry name" value="ANK_REP_REGION"/>
    <property type="match status" value="1"/>
</dbReference>
<sequence>MVPPEEIASASNPDIEGENILHFLCREGDITDLMAFKNVISDANRHLVLQFNRHGKQCVHIVSNPGIADPQEKLKLLMEWGADINGQERVFGNTPLHIAAYTQNHKLATWLCNQPGINMGISNYLFKTPYYVACERHDIKIMNILRAKGGQCRIYRCNEAWLFTRNY</sequence>
<keyword id="KW-0040">ANK repeat</keyword>
<keyword id="KW-0945">Host-virus interaction</keyword>
<keyword id="KW-1100">Inhibition of host NF-kappa-B by virus</keyword>
<keyword id="KW-1185">Reference proteome</keyword>
<keyword id="KW-0677">Repeat</keyword>
<feature type="chain" id="PRO_0000405366" description="I-Kappa-B like protein I1">
    <location>
        <begin position="1"/>
        <end position="167"/>
    </location>
</feature>
<feature type="repeat" description="ANK 1">
    <location>
        <begin position="54"/>
        <end position="86"/>
    </location>
</feature>
<feature type="repeat" description="ANK 2">
    <location>
        <begin position="91"/>
        <end position="121"/>
    </location>
</feature>
<feature type="repeat" description="ANK 3">
    <location>
        <begin position="125"/>
        <end position="154"/>
    </location>
</feature>
<organismHost>
    <name type="scientific">Microplitis demolitor</name>
    <name type="common">Parasitoid wasp</name>
    <dbReference type="NCBI Taxonomy" id="69319"/>
</organismHost>
<gene>
    <name type="primary">I1</name>
</gene>
<evidence type="ECO:0000250" key="1"/>
<evidence type="ECO:0000269" key="2">
    <source>
    </source>
</evidence>
<evidence type="ECO:0000305" key="3"/>
<organism>
    <name type="scientific">Microplitis demolitor bracovirus (isolate Webb)</name>
    <name type="common">MdBV</name>
    <dbReference type="NCBI Taxonomy" id="654919"/>
    <lineage>
        <taxon>Viruses</taxon>
        <taxon>Viruses incertae sedis</taxon>
        <taxon>Polydnaviriformidae</taxon>
        <taxon>Bracoviriform</taxon>
        <taxon>Microplitis demolitor bracovirus</taxon>
    </lineage>
</organism>
<comment type="function">
    <text evidence="1 2">Suppresses the host immune response through NF-kappa-B inactivation. Possesses ankyrin repeat domains required for NF-kappa-B binding but lacks the regulatory regions required for dissociation from NF-kappa-B and degradation. Therefore, prevents host NF-kappa-B release and subsequent activation (By similarity).</text>
</comment>
<comment type="similarity">
    <text evidence="3">Belongs to the polydnaviridae I-Kappa-B-like protein family.</text>
</comment>
<name>IKBI1_MDBVW</name>